<protein>
    <recommendedName>
        <fullName>Protein CDV3 homolog B</fullName>
    </recommendedName>
    <alternativeName>
        <fullName>Heat-stable protein p37</fullName>
    </alternativeName>
</protein>
<evidence type="ECO:0000250" key="1"/>
<evidence type="ECO:0000256" key="2">
    <source>
        <dbReference type="SAM" id="MobiDB-lite"/>
    </source>
</evidence>
<evidence type="ECO:0000305" key="3"/>
<organism>
    <name type="scientific">Xenopus laevis</name>
    <name type="common">African clawed frog</name>
    <dbReference type="NCBI Taxonomy" id="8355"/>
    <lineage>
        <taxon>Eukaryota</taxon>
        <taxon>Metazoa</taxon>
        <taxon>Chordata</taxon>
        <taxon>Craniata</taxon>
        <taxon>Vertebrata</taxon>
        <taxon>Euteleostomi</taxon>
        <taxon>Amphibia</taxon>
        <taxon>Batrachia</taxon>
        <taxon>Anura</taxon>
        <taxon>Pipoidea</taxon>
        <taxon>Pipidae</taxon>
        <taxon>Xenopodinae</taxon>
        <taxon>Xenopus</taxon>
        <taxon>Xenopus</taxon>
    </lineage>
</organism>
<dbReference type="EMBL" id="AB106880">
    <property type="protein sequence ID" value="BAF51553.1"/>
    <property type="molecule type" value="mRNA"/>
</dbReference>
<dbReference type="EMBL" id="BC099023">
    <property type="protein sequence ID" value="AAH99023.1"/>
    <property type="molecule type" value="mRNA"/>
</dbReference>
<dbReference type="RefSeq" id="NP_001089590.1">
    <property type="nucleotide sequence ID" value="NM_001096121.1"/>
</dbReference>
<dbReference type="DNASU" id="734647"/>
<dbReference type="GeneID" id="734647"/>
<dbReference type="KEGG" id="xla:734647"/>
<dbReference type="AGR" id="Xenbase:XB-GENE-5805487"/>
<dbReference type="CTD" id="734647"/>
<dbReference type="Xenbase" id="XB-GENE-5805487">
    <property type="gene designation" value="cdv3.L"/>
</dbReference>
<dbReference type="OrthoDB" id="6288097at2759"/>
<dbReference type="Proteomes" id="UP000186698">
    <property type="component" value="Chromosome 6L"/>
</dbReference>
<dbReference type="Bgee" id="734647">
    <property type="expression patterns" value="Expressed in blastula and 19 other cell types or tissues"/>
</dbReference>
<dbReference type="GO" id="GO:0005737">
    <property type="term" value="C:cytoplasm"/>
    <property type="evidence" value="ECO:0000318"/>
    <property type="project" value="GO_Central"/>
</dbReference>
<dbReference type="InterPro" id="IPR026806">
    <property type="entry name" value="CDV3"/>
</dbReference>
<dbReference type="PANTHER" id="PTHR16284">
    <property type="entry name" value="PROTEIN CDV3 HOMOLOG"/>
    <property type="match status" value="1"/>
</dbReference>
<dbReference type="PANTHER" id="PTHR16284:SF13">
    <property type="entry name" value="PROTEIN CDV3 HOMOLOG"/>
    <property type="match status" value="1"/>
</dbReference>
<dbReference type="Pfam" id="PF15359">
    <property type="entry name" value="CDV3"/>
    <property type="match status" value="1"/>
</dbReference>
<name>CDV3B_XENLA</name>
<keyword id="KW-0007">Acetylation</keyword>
<keyword id="KW-0963">Cytoplasm</keyword>
<keyword id="KW-1185">Reference proteome</keyword>
<reference key="1">
    <citation type="submission" date="2003-03" db="EMBL/GenBank/DDBJ databases">
        <title>Xenopus egg heat-stable protein, p37.</title>
        <authorList>
            <person name="Ichioka M."/>
            <person name="Horigome T."/>
        </authorList>
    </citation>
    <scope>NUCLEOTIDE SEQUENCE [MRNA]</scope>
</reference>
<reference key="2">
    <citation type="submission" date="2003-01" db="EMBL/GenBank/DDBJ databases">
        <authorList>
            <consortium name="NIH - Xenopus Gene Collection (XGC) project"/>
        </authorList>
    </citation>
    <scope>NUCLEOTIDE SEQUENCE [LARGE SCALE MRNA]</scope>
    <source>
        <tissue>Embryo</tissue>
    </source>
</reference>
<comment type="subcellular location">
    <subcellularLocation>
        <location evidence="1">Cytoplasm</location>
    </subcellularLocation>
</comment>
<comment type="similarity">
    <text evidence="3">Belongs to the CDV3 family.</text>
</comment>
<proteinExistence type="evidence at transcript level"/>
<accession>A4PB26</accession>
<accession>Q4KLS3</accession>
<sequence length="242" mass="26539">MAEPEERSLDDFFAKRDKKKKKDKGGSGSAAGSRGPARPSDGATSSSLSSYVSAAGKGVKKEKSGKSENPDQLQEKEEDEWKEFEQKEVDYSGLRLQSLQISNEKEDDENENKEEQGADWEESGGFGSDKSSGPWNKTAQAQAPISAVEEAPEPVHTGGVYRPPGARASVTTRKPQGPPEIYSDTQFPSPQATAKHTESRREKEMEKTFEIVKHKNRASNEAAKNPAPRPQLDNQYAVLGEQ</sequence>
<feature type="initiator methionine" description="Removed" evidence="1">
    <location>
        <position position="1"/>
    </location>
</feature>
<feature type="chain" id="PRO_0000299566" description="Protein CDV3 homolog B">
    <location>
        <begin position="2"/>
        <end position="242"/>
    </location>
</feature>
<feature type="region of interest" description="Disordered" evidence="2">
    <location>
        <begin position="1"/>
        <end position="242"/>
    </location>
</feature>
<feature type="compositionally biased region" description="Basic and acidic residues" evidence="2">
    <location>
        <begin position="1"/>
        <end position="15"/>
    </location>
</feature>
<feature type="compositionally biased region" description="Low complexity" evidence="2">
    <location>
        <begin position="30"/>
        <end position="57"/>
    </location>
</feature>
<feature type="compositionally biased region" description="Basic and acidic residues" evidence="2">
    <location>
        <begin position="59"/>
        <end position="75"/>
    </location>
</feature>
<feature type="compositionally biased region" description="Acidic residues" evidence="2">
    <location>
        <begin position="105"/>
        <end position="122"/>
    </location>
</feature>
<feature type="compositionally biased region" description="Polar residues" evidence="2">
    <location>
        <begin position="129"/>
        <end position="143"/>
    </location>
</feature>
<feature type="compositionally biased region" description="Polar residues" evidence="2">
    <location>
        <begin position="183"/>
        <end position="194"/>
    </location>
</feature>
<feature type="compositionally biased region" description="Basic and acidic residues" evidence="2">
    <location>
        <begin position="195"/>
        <end position="213"/>
    </location>
</feature>
<feature type="modified residue" description="N-acetylalanine" evidence="1">
    <location>
        <position position="2"/>
    </location>
</feature>
<feature type="sequence conflict" description="In Ref. 2; AAH99023." evidence="3" ref="2">
    <original>P</original>
    <variation>L</variation>
    <location>
        <position position="190"/>
    </location>
</feature>
<feature type="sequence conflict" description="In Ref. 2; AAH99023." evidence="3" ref="2">
    <original>PRP</original>
    <variation>LRL</variation>
    <location>
        <begin position="228"/>
        <end position="230"/>
    </location>
</feature>
<gene>
    <name type="primary">cdv3-b</name>
    <name type="synonym">hs37</name>
</gene>